<evidence type="ECO:0000255" key="1">
    <source>
        <dbReference type="HAMAP-Rule" id="MF_00222"/>
    </source>
</evidence>
<gene>
    <name evidence="1" type="primary">aroE</name>
    <name type="ordered locus">CJA_3588</name>
</gene>
<name>AROE_CELJU</name>
<comment type="function">
    <text evidence="1">Involved in the biosynthesis of the chorismate, which leads to the biosynthesis of aromatic amino acids. Catalyzes the reversible NADPH linked reduction of 3-dehydroshikimate (DHSA) to yield shikimate (SA).</text>
</comment>
<comment type="catalytic activity">
    <reaction evidence="1">
        <text>shikimate + NADP(+) = 3-dehydroshikimate + NADPH + H(+)</text>
        <dbReference type="Rhea" id="RHEA:17737"/>
        <dbReference type="ChEBI" id="CHEBI:15378"/>
        <dbReference type="ChEBI" id="CHEBI:16630"/>
        <dbReference type="ChEBI" id="CHEBI:36208"/>
        <dbReference type="ChEBI" id="CHEBI:57783"/>
        <dbReference type="ChEBI" id="CHEBI:58349"/>
        <dbReference type="EC" id="1.1.1.25"/>
    </reaction>
</comment>
<comment type="pathway">
    <text evidence="1">Metabolic intermediate biosynthesis; chorismate biosynthesis; chorismate from D-erythrose 4-phosphate and phosphoenolpyruvate: step 4/7.</text>
</comment>
<comment type="subunit">
    <text evidence="1">Homodimer.</text>
</comment>
<comment type="similarity">
    <text evidence="1">Belongs to the shikimate dehydrogenase family.</text>
</comment>
<feature type="chain" id="PRO_1000124880" description="Shikimate dehydrogenase (NADP(+))">
    <location>
        <begin position="1"/>
        <end position="276"/>
    </location>
</feature>
<feature type="active site" description="Proton acceptor" evidence="1">
    <location>
        <position position="66"/>
    </location>
</feature>
<feature type="binding site" evidence="1">
    <location>
        <begin position="15"/>
        <end position="17"/>
    </location>
    <ligand>
        <name>shikimate</name>
        <dbReference type="ChEBI" id="CHEBI:36208"/>
    </ligand>
</feature>
<feature type="binding site" evidence="1">
    <location>
        <position position="62"/>
    </location>
    <ligand>
        <name>shikimate</name>
        <dbReference type="ChEBI" id="CHEBI:36208"/>
    </ligand>
</feature>
<feature type="binding site" evidence="1">
    <location>
        <position position="87"/>
    </location>
    <ligand>
        <name>shikimate</name>
        <dbReference type="ChEBI" id="CHEBI:36208"/>
    </ligand>
</feature>
<feature type="binding site" evidence="1">
    <location>
        <position position="103"/>
    </location>
    <ligand>
        <name>shikimate</name>
        <dbReference type="ChEBI" id="CHEBI:36208"/>
    </ligand>
</feature>
<feature type="binding site" evidence="1">
    <location>
        <begin position="127"/>
        <end position="131"/>
    </location>
    <ligand>
        <name>NADP(+)</name>
        <dbReference type="ChEBI" id="CHEBI:58349"/>
    </ligand>
</feature>
<feature type="binding site" evidence="1">
    <location>
        <begin position="151"/>
        <end position="156"/>
    </location>
    <ligand>
        <name>NADP(+)</name>
        <dbReference type="ChEBI" id="CHEBI:58349"/>
    </ligand>
</feature>
<feature type="binding site" evidence="1">
    <location>
        <position position="215"/>
    </location>
    <ligand>
        <name>NADP(+)</name>
        <dbReference type="ChEBI" id="CHEBI:58349"/>
    </ligand>
</feature>
<feature type="binding site" evidence="1">
    <location>
        <position position="217"/>
    </location>
    <ligand>
        <name>shikimate</name>
        <dbReference type="ChEBI" id="CHEBI:36208"/>
    </ligand>
</feature>
<feature type="binding site" evidence="1">
    <location>
        <position position="239"/>
    </location>
    <ligand>
        <name>NADP(+)</name>
        <dbReference type="ChEBI" id="CHEBI:58349"/>
    </ligand>
</feature>
<organism>
    <name type="scientific">Cellvibrio japonicus (strain Ueda107)</name>
    <name type="common">Pseudomonas fluorescens subsp. cellulosa</name>
    <dbReference type="NCBI Taxonomy" id="498211"/>
    <lineage>
        <taxon>Bacteria</taxon>
        <taxon>Pseudomonadati</taxon>
        <taxon>Pseudomonadota</taxon>
        <taxon>Gammaproteobacteria</taxon>
        <taxon>Cellvibrionales</taxon>
        <taxon>Cellvibrionaceae</taxon>
        <taxon>Cellvibrio</taxon>
    </lineage>
</organism>
<sequence>MTDLYAVFGNPINHSKSPSIHRMFAEQTGQDLHYTKQLVDVDKFAQTADAFFAQGGRGLNITVPFKQEAFRYAHSLTPRAERAGAVNFLVQLSDGSIRGDNTDGIGMVHDMHNLDWNIAGKRVLLLGAGGAVRGVLQPLLEEHPAQVVIANRTLSKAEELAKNFLDLGNVEAKGYDQLNGAHFDIVINGTSASLHGELPPLPDNLLNPGACCYDMMYGAEPTVFLQWAQQQGAAHTADGLGMLVGQAAEAFYLWRQIRPEVVPVLTALRRQLHEKK</sequence>
<accession>B3PGZ3</accession>
<keyword id="KW-0028">Amino-acid biosynthesis</keyword>
<keyword id="KW-0057">Aromatic amino acid biosynthesis</keyword>
<keyword id="KW-0521">NADP</keyword>
<keyword id="KW-0560">Oxidoreductase</keyword>
<keyword id="KW-1185">Reference proteome</keyword>
<reference key="1">
    <citation type="journal article" date="2008" name="J. Bacteriol.">
        <title>Insights into plant cell wall degradation from the genome sequence of the soil bacterium Cellvibrio japonicus.</title>
        <authorList>
            <person name="DeBoy R.T."/>
            <person name="Mongodin E.F."/>
            <person name="Fouts D.E."/>
            <person name="Tailford L.E."/>
            <person name="Khouri H."/>
            <person name="Emerson J.B."/>
            <person name="Mohamoud Y."/>
            <person name="Watkins K."/>
            <person name="Henrissat B."/>
            <person name="Gilbert H.J."/>
            <person name="Nelson K.E."/>
        </authorList>
    </citation>
    <scope>NUCLEOTIDE SEQUENCE [LARGE SCALE GENOMIC DNA]</scope>
    <source>
        <strain>Ueda107</strain>
    </source>
</reference>
<dbReference type="EC" id="1.1.1.25" evidence="1"/>
<dbReference type="EMBL" id="CP000934">
    <property type="protein sequence ID" value="ACE84806.1"/>
    <property type="molecule type" value="Genomic_DNA"/>
</dbReference>
<dbReference type="RefSeq" id="WP_012489163.1">
    <property type="nucleotide sequence ID" value="NC_010995.1"/>
</dbReference>
<dbReference type="SMR" id="B3PGZ3"/>
<dbReference type="STRING" id="498211.CJA_3588"/>
<dbReference type="KEGG" id="cja:CJA_3588"/>
<dbReference type="eggNOG" id="COG0169">
    <property type="taxonomic scope" value="Bacteria"/>
</dbReference>
<dbReference type="HOGENOM" id="CLU_044063_2_1_6"/>
<dbReference type="OrthoDB" id="9776868at2"/>
<dbReference type="UniPathway" id="UPA00053">
    <property type="reaction ID" value="UER00087"/>
</dbReference>
<dbReference type="Proteomes" id="UP000001036">
    <property type="component" value="Chromosome"/>
</dbReference>
<dbReference type="GO" id="GO:0005829">
    <property type="term" value="C:cytosol"/>
    <property type="evidence" value="ECO:0007669"/>
    <property type="project" value="TreeGrafter"/>
</dbReference>
<dbReference type="GO" id="GO:0050661">
    <property type="term" value="F:NADP binding"/>
    <property type="evidence" value="ECO:0007669"/>
    <property type="project" value="InterPro"/>
</dbReference>
<dbReference type="GO" id="GO:0004764">
    <property type="term" value="F:shikimate 3-dehydrogenase (NADP+) activity"/>
    <property type="evidence" value="ECO:0007669"/>
    <property type="project" value="UniProtKB-UniRule"/>
</dbReference>
<dbReference type="GO" id="GO:0008652">
    <property type="term" value="P:amino acid biosynthetic process"/>
    <property type="evidence" value="ECO:0007669"/>
    <property type="project" value="UniProtKB-KW"/>
</dbReference>
<dbReference type="GO" id="GO:0009073">
    <property type="term" value="P:aromatic amino acid family biosynthetic process"/>
    <property type="evidence" value="ECO:0007669"/>
    <property type="project" value="UniProtKB-KW"/>
</dbReference>
<dbReference type="GO" id="GO:0009423">
    <property type="term" value="P:chorismate biosynthetic process"/>
    <property type="evidence" value="ECO:0007669"/>
    <property type="project" value="UniProtKB-UniRule"/>
</dbReference>
<dbReference type="GO" id="GO:0019632">
    <property type="term" value="P:shikimate metabolic process"/>
    <property type="evidence" value="ECO:0007669"/>
    <property type="project" value="InterPro"/>
</dbReference>
<dbReference type="CDD" id="cd01065">
    <property type="entry name" value="NAD_bind_Shikimate_DH"/>
    <property type="match status" value="1"/>
</dbReference>
<dbReference type="FunFam" id="3.40.50.10860:FF:000006">
    <property type="entry name" value="Shikimate dehydrogenase (NADP(+))"/>
    <property type="match status" value="1"/>
</dbReference>
<dbReference type="FunFam" id="3.40.50.720:FF:000104">
    <property type="entry name" value="Shikimate dehydrogenase (NADP(+))"/>
    <property type="match status" value="1"/>
</dbReference>
<dbReference type="Gene3D" id="3.40.50.10860">
    <property type="entry name" value="Leucine Dehydrogenase, chain A, domain 1"/>
    <property type="match status" value="1"/>
</dbReference>
<dbReference type="Gene3D" id="3.40.50.720">
    <property type="entry name" value="NAD(P)-binding Rossmann-like Domain"/>
    <property type="match status" value="1"/>
</dbReference>
<dbReference type="HAMAP" id="MF_00222">
    <property type="entry name" value="Shikimate_DH_AroE"/>
    <property type="match status" value="1"/>
</dbReference>
<dbReference type="InterPro" id="IPR046346">
    <property type="entry name" value="Aminoacid_DH-like_N_sf"/>
</dbReference>
<dbReference type="InterPro" id="IPR036291">
    <property type="entry name" value="NAD(P)-bd_dom_sf"/>
</dbReference>
<dbReference type="InterPro" id="IPR041121">
    <property type="entry name" value="SDH_C"/>
</dbReference>
<dbReference type="InterPro" id="IPR011342">
    <property type="entry name" value="Shikimate_DH"/>
</dbReference>
<dbReference type="InterPro" id="IPR013708">
    <property type="entry name" value="Shikimate_DH-bd_N"/>
</dbReference>
<dbReference type="InterPro" id="IPR022893">
    <property type="entry name" value="Shikimate_DH_fam"/>
</dbReference>
<dbReference type="InterPro" id="IPR006151">
    <property type="entry name" value="Shikm_DH/Glu-tRNA_Rdtase"/>
</dbReference>
<dbReference type="NCBIfam" id="TIGR00507">
    <property type="entry name" value="aroE"/>
    <property type="match status" value="1"/>
</dbReference>
<dbReference type="NCBIfam" id="NF001310">
    <property type="entry name" value="PRK00258.1-2"/>
    <property type="match status" value="1"/>
</dbReference>
<dbReference type="PANTHER" id="PTHR21089:SF1">
    <property type="entry name" value="BIFUNCTIONAL 3-DEHYDROQUINATE DEHYDRATASE_SHIKIMATE DEHYDROGENASE, CHLOROPLASTIC"/>
    <property type="match status" value="1"/>
</dbReference>
<dbReference type="PANTHER" id="PTHR21089">
    <property type="entry name" value="SHIKIMATE DEHYDROGENASE"/>
    <property type="match status" value="1"/>
</dbReference>
<dbReference type="Pfam" id="PF18317">
    <property type="entry name" value="SDH_C"/>
    <property type="match status" value="1"/>
</dbReference>
<dbReference type="Pfam" id="PF01488">
    <property type="entry name" value="Shikimate_DH"/>
    <property type="match status" value="1"/>
</dbReference>
<dbReference type="Pfam" id="PF08501">
    <property type="entry name" value="Shikimate_dh_N"/>
    <property type="match status" value="1"/>
</dbReference>
<dbReference type="SUPFAM" id="SSF53223">
    <property type="entry name" value="Aminoacid dehydrogenase-like, N-terminal domain"/>
    <property type="match status" value="1"/>
</dbReference>
<dbReference type="SUPFAM" id="SSF51735">
    <property type="entry name" value="NAD(P)-binding Rossmann-fold domains"/>
    <property type="match status" value="1"/>
</dbReference>
<protein>
    <recommendedName>
        <fullName evidence="1">Shikimate dehydrogenase (NADP(+))</fullName>
        <shortName evidence="1">SDH</shortName>
        <ecNumber evidence="1">1.1.1.25</ecNumber>
    </recommendedName>
</protein>
<proteinExistence type="inferred from homology"/>